<feature type="chain" id="PRO_0000333323" description="Ribosomal RNA large subunit methyltransferase E">
    <location>
        <begin position="1"/>
        <end position="206"/>
    </location>
</feature>
<feature type="active site" description="Proton acceptor" evidence="1">
    <location>
        <position position="161"/>
    </location>
</feature>
<feature type="binding site" evidence="1">
    <location>
        <position position="60"/>
    </location>
    <ligand>
        <name>S-adenosyl-L-methionine</name>
        <dbReference type="ChEBI" id="CHEBI:59789"/>
    </ligand>
</feature>
<feature type="binding site" evidence="1">
    <location>
        <position position="62"/>
    </location>
    <ligand>
        <name>S-adenosyl-L-methionine</name>
        <dbReference type="ChEBI" id="CHEBI:59789"/>
    </ligand>
</feature>
<feature type="binding site" evidence="1">
    <location>
        <position position="80"/>
    </location>
    <ligand>
        <name>S-adenosyl-L-methionine</name>
        <dbReference type="ChEBI" id="CHEBI:59789"/>
    </ligand>
</feature>
<feature type="binding site" evidence="1">
    <location>
        <position position="96"/>
    </location>
    <ligand>
        <name>S-adenosyl-L-methionine</name>
        <dbReference type="ChEBI" id="CHEBI:59789"/>
    </ligand>
</feature>
<feature type="binding site" evidence="1">
    <location>
        <position position="121"/>
    </location>
    <ligand>
        <name>S-adenosyl-L-methionine</name>
        <dbReference type="ChEBI" id="CHEBI:59789"/>
    </ligand>
</feature>
<name>RLME_LEGPC</name>
<keyword id="KW-0963">Cytoplasm</keyword>
<keyword id="KW-0489">Methyltransferase</keyword>
<keyword id="KW-0698">rRNA processing</keyword>
<keyword id="KW-0949">S-adenosyl-L-methionine</keyword>
<keyword id="KW-0808">Transferase</keyword>
<proteinExistence type="inferred from homology"/>
<organism>
    <name type="scientific">Legionella pneumophila (strain Corby)</name>
    <dbReference type="NCBI Taxonomy" id="400673"/>
    <lineage>
        <taxon>Bacteria</taxon>
        <taxon>Pseudomonadati</taxon>
        <taxon>Pseudomonadota</taxon>
        <taxon>Gammaproteobacteria</taxon>
        <taxon>Legionellales</taxon>
        <taxon>Legionellaceae</taxon>
        <taxon>Legionella</taxon>
    </lineage>
</organism>
<dbReference type="EC" id="2.1.1.166" evidence="1"/>
<dbReference type="EMBL" id="CP000675">
    <property type="protein sequence ID" value="ABQ56970.1"/>
    <property type="status" value="ALT_INIT"/>
    <property type="molecule type" value="Genomic_DNA"/>
</dbReference>
<dbReference type="RefSeq" id="WP_014844850.1">
    <property type="nucleotide sequence ID" value="NC_009494.2"/>
</dbReference>
<dbReference type="SMR" id="A5IHX0"/>
<dbReference type="KEGG" id="lpc:LPC_3083"/>
<dbReference type="HOGENOM" id="CLU_009422_4_0_6"/>
<dbReference type="GO" id="GO:0005737">
    <property type="term" value="C:cytoplasm"/>
    <property type="evidence" value="ECO:0007669"/>
    <property type="project" value="UniProtKB-SubCell"/>
</dbReference>
<dbReference type="GO" id="GO:0008650">
    <property type="term" value="F:rRNA (uridine-2'-O-)-methyltransferase activity"/>
    <property type="evidence" value="ECO:0007669"/>
    <property type="project" value="UniProtKB-UniRule"/>
</dbReference>
<dbReference type="FunFam" id="3.40.50.150:FF:000005">
    <property type="entry name" value="Ribosomal RNA large subunit methyltransferase E"/>
    <property type="match status" value="1"/>
</dbReference>
<dbReference type="Gene3D" id="3.40.50.150">
    <property type="entry name" value="Vaccinia Virus protein VP39"/>
    <property type="match status" value="1"/>
</dbReference>
<dbReference type="HAMAP" id="MF_01547">
    <property type="entry name" value="RNA_methyltr_E"/>
    <property type="match status" value="1"/>
</dbReference>
<dbReference type="InterPro" id="IPR050082">
    <property type="entry name" value="RNA_methyltr_RlmE"/>
</dbReference>
<dbReference type="InterPro" id="IPR002877">
    <property type="entry name" value="RNA_MeTrfase_FtsJ_dom"/>
</dbReference>
<dbReference type="InterPro" id="IPR015507">
    <property type="entry name" value="rRNA-MeTfrase_E"/>
</dbReference>
<dbReference type="InterPro" id="IPR029063">
    <property type="entry name" value="SAM-dependent_MTases_sf"/>
</dbReference>
<dbReference type="NCBIfam" id="NF008390">
    <property type="entry name" value="PRK11188.1"/>
    <property type="match status" value="1"/>
</dbReference>
<dbReference type="PANTHER" id="PTHR10920">
    <property type="entry name" value="RIBOSOMAL RNA METHYLTRANSFERASE"/>
    <property type="match status" value="1"/>
</dbReference>
<dbReference type="PANTHER" id="PTHR10920:SF18">
    <property type="entry name" value="RRNA METHYLTRANSFERASE 2, MITOCHONDRIAL"/>
    <property type="match status" value="1"/>
</dbReference>
<dbReference type="Pfam" id="PF01728">
    <property type="entry name" value="FtsJ"/>
    <property type="match status" value="1"/>
</dbReference>
<dbReference type="PIRSF" id="PIRSF005461">
    <property type="entry name" value="23S_rRNA_mtase"/>
    <property type="match status" value="1"/>
</dbReference>
<dbReference type="SUPFAM" id="SSF53335">
    <property type="entry name" value="S-adenosyl-L-methionine-dependent methyltransferases"/>
    <property type="match status" value="1"/>
</dbReference>
<protein>
    <recommendedName>
        <fullName evidence="1">Ribosomal RNA large subunit methyltransferase E</fullName>
        <ecNumber evidence="1">2.1.1.166</ecNumber>
    </recommendedName>
    <alternativeName>
        <fullName evidence="1">23S rRNA Um2552 methyltransferase</fullName>
    </alternativeName>
    <alternativeName>
        <fullName evidence="1">rRNA (uridine-2'-O-)-methyltransferase</fullName>
    </alternativeName>
</protein>
<gene>
    <name evidence="1" type="primary">rlmE</name>
    <name evidence="1" type="synonym">ftsJ</name>
    <name evidence="1" type="synonym">rrmJ</name>
    <name type="ordered locus">LPC_3083</name>
</gene>
<evidence type="ECO:0000255" key="1">
    <source>
        <dbReference type="HAMAP-Rule" id="MF_01547"/>
    </source>
</evidence>
<evidence type="ECO:0000305" key="2"/>
<comment type="function">
    <text evidence="1">Specifically methylates the uridine in position 2552 of 23S rRNA at the 2'-O position of the ribose in the fully assembled 50S ribosomal subunit.</text>
</comment>
<comment type="catalytic activity">
    <reaction evidence="1">
        <text>uridine(2552) in 23S rRNA + S-adenosyl-L-methionine = 2'-O-methyluridine(2552) in 23S rRNA + S-adenosyl-L-homocysteine + H(+)</text>
        <dbReference type="Rhea" id="RHEA:42720"/>
        <dbReference type="Rhea" id="RHEA-COMP:10202"/>
        <dbReference type="Rhea" id="RHEA-COMP:10203"/>
        <dbReference type="ChEBI" id="CHEBI:15378"/>
        <dbReference type="ChEBI" id="CHEBI:57856"/>
        <dbReference type="ChEBI" id="CHEBI:59789"/>
        <dbReference type="ChEBI" id="CHEBI:65315"/>
        <dbReference type="ChEBI" id="CHEBI:74478"/>
        <dbReference type="EC" id="2.1.1.166"/>
    </reaction>
</comment>
<comment type="subcellular location">
    <subcellularLocation>
        <location evidence="1">Cytoplasm</location>
    </subcellularLocation>
</comment>
<comment type="similarity">
    <text evidence="1">Belongs to the class I-like SAM-binding methyltransferase superfamily. RNA methyltransferase RlmE family.</text>
</comment>
<comment type="sequence caution" evidence="2">
    <conflict type="erroneous initiation">
        <sequence resource="EMBL-CDS" id="ABQ56970"/>
    </conflict>
</comment>
<sequence>MSRTKSSKRWLQEHFDDVYVKKAQAEGYRSRAVYKLKEIDDKESLIKPGMTVVDLGAAPGGWTQYASEKMKGSGRLVALDILPMDALPNVEFILGDFREDNVLQELINLIPQRTLDLLLSDMAPNMSGSSAIDIPRAMYLVELAFDFAEKMLKPGGNMLVKIFHGSGFDELVKQARASFEKVVIRKPSASRSRSKETYLLAKGYNL</sequence>
<reference key="1">
    <citation type="submission" date="2006-11" db="EMBL/GenBank/DDBJ databases">
        <title>Identification and characterization of a new conjugation/ type IVA secretion system (trb/tra) of L. pneumophila Corby localized on a mobile genomic island.</title>
        <authorList>
            <person name="Gloeckner G."/>
            <person name="Albert-Weissenberger C."/>
            <person name="Weinmann E."/>
            <person name="Jacobi S."/>
            <person name="Schunder E."/>
            <person name="Steinert M."/>
            <person name="Buchrieser C."/>
            <person name="Hacker J."/>
            <person name="Heuner K."/>
        </authorList>
    </citation>
    <scope>NUCLEOTIDE SEQUENCE [LARGE SCALE GENOMIC DNA]</scope>
    <source>
        <strain>Corby</strain>
    </source>
</reference>
<accession>A5IHX0</accession>